<keyword id="KW-0997">Cell inner membrane</keyword>
<keyword id="KW-1003">Cell membrane</keyword>
<keyword id="KW-0472">Membrane</keyword>
<keyword id="KW-0653">Protein transport</keyword>
<keyword id="KW-1185">Reference proteome</keyword>
<keyword id="KW-0811">Translocation</keyword>
<keyword id="KW-0812">Transmembrane</keyword>
<keyword id="KW-1133">Transmembrane helix</keyword>
<keyword id="KW-0813">Transport</keyword>
<dbReference type="EMBL" id="CP000251">
    <property type="protein sequence ID" value="ABC82310.1"/>
    <property type="molecule type" value="Genomic_DNA"/>
</dbReference>
<dbReference type="RefSeq" id="WP_011421592.1">
    <property type="nucleotide sequence ID" value="NC_007760.1"/>
</dbReference>
<dbReference type="SMR" id="Q2IKX9"/>
<dbReference type="STRING" id="290397.Adeh_2540"/>
<dbReference type="KEGG" id="ade:Adeh_2540"/>
<dbReference type="eggNOG" id="COG0342">
    <property type="taxonomic scope" value="Bacteria"/>
</dbReference>
<dbReference type="HOGENOM" id="CLU_007894_4_3_7"/>
<dbReference type="OrthoDB" id="9805019at2"/>
<dbReference type="Proteomes" id="UP000001935">
    <property type="component" value="Chromosome"/>
</dbReference>
<dbReference type="GO" id="GO:0005886">
    <property type="term" value="C:plasma membrane"/>
    <property type="evidence" value="ECO:0007669"/>
    <property type="project" value="UniProtKB-SubCell"/>
</dbReference>
<dbReference type="GO" id="GO:0015450">
    <property type="term" value="F:protein-transporting ATPase activity"/>
    <property type="evidence" value="ECO:0007669"/>
    <property type="project" value="InterPro"/>
</dbReference>
<dbReference type="GO" id="GO:0065002">
    <property type="term" value="P:intracellular protein transmembrane transport"/>
    <property type="evidence" value="ECO:0007669"/>
    <property type="project" value="UniProtKB-UniRule"/>
</dbReference>
<dbReference type="GO" id="GO:0006605">
    <property type="term" value="P:protein targeting"/>
    <property type="evidence" value="ECO:0007669"/>
    <property type="project" value="UniProtKB-UniRule"/>
</dbReference>
<dbReference type="GO" id="GO:0043952">
    <property type="term" value="P:protein transport by the Sec complex"/>
    <property type="evidence" value="ECO:0007669"/>
    <property type="project" value="UniProtKB-UniRule"/>
</dbReference>
<dbReference type="FunFam" id="1.20.1640.10:FF:000004">
    <property type="entry name" value="Protein translocase subunit SecD"/>
    <property type="match status" value="1"/>
</dbReference>
<dbReference type="Gene3D" id="3.30.1360.200">
    <property type="match status" value="1"/>
</dbReference>
<dbReference type="Gene3D" id="3.30.70.3220">
    <property type="match status" value="1"/>
</dbReference>
<dbReference type="Gene3D" id="1.20.1640.10">
    <property type="entry name" value="Multidrug efflux transporter AcrB transmembrane domain"/>
    <property type="match status" value="1"/>
</dbReference>
<dbReference type="HAMAP" id="MF_01463_B">
    <property type="entry name" value="SecD_B"/>
    <property type="match status" value="1"/>
</dbReference>
<dbReference type="InterPro" id="IPR001036">
    <property type="entry name" value="Acrflvin-R"/>
</dbReference>
<dbReference type="InterPro" id="IPR005791">
    <property type="entry name" value="SecD"/>
</dbReference>
<dbReference type="InterPro" id="IPR022813">
    <property type="entry name" value="SecD/SecF_arch_bac"/>
</dbReference>
<dbReference type="InterPro" id="IPR048631">
    <property type="entry name" value="SecD_1st"/>
</dbReference>
<dbReference type="InterPro" id="IPR048634">
    <property type="entry name" value="SecD_SecF_C"/>
</dbReference>
<dbReference type="InterPro" id="IPR055344">
    <property type="entry name" value="SecD_SecF_C_bact"/>
</dbReference>
<dbReference type="InterPro" id="IPR054384">
    <property type="entry name" value="SecDF_P1_head"/>
</dbReference>
<dbReference type="NCBIfam" id="TIGR00916">
    <property type="entry name" value="2A0604s01"/>
    <property type="match status" value="1"/>
</dbReference>
<dbReference type="NCBIfam" id="TIGR01129">
    <property type="entry name" value="secD"/>
    <property type="match status" value="1"/>
</dbReference>
<dbReference type="PANTHER" id="PTHR30081:SF1">
    <property type="entry name" value="PROTEIN TRANSLOCASE SUBUNIT SECD"/>
    <property type="match status" value="1"/>
</dbReference>
<dbReference type="PANTHER" id="PTHR30081">
    <property type="entry name" value="PROTEIN-EXPORT MEMBRANE PROTEIN SEC"/>
    <property type="match status" value="1"/>
</dbReference>
<dbReference type="Pfam" id="PF21760">
    <property type="entry name" value="SecD_1st"/>
    <property type="match status" value="1"/>
</dbReference>
<dbReference type="Pfam" id="PF02355">
    <property type="entry name" value="SecD_SecF_C"/>
    <property type="match status" value="1"/>
</dbReference>
<dbReference type="Pfam" id="PF22599">
    <property type="entry name" value="SecDF_P1_head"/>
    <property type="match status" value="1"/>
</dbReference>
<dbReference type="PRINTS" id="PR00702">
    <property type="entry name" value="ACRIFLAVINRP"/>
</dbReference>
<dbReference type="SUPFAM" id="SSF82866">
    <property type="entry name" value="Multidrug efflux transporter AcrB transmembrane domain"/>
    <property type="match status" value="1"/>
</dbReference>
<organism>
    <name type="scientific">Anaeromyxobacter dehalogenans (strain 2CP-C)</name>
    <dbReference type="NCBI Taxonomy" id="290397"/>
    <lineage>
        <taxon>Bacteria</taxon>
        <taxon>Pseudomonadati</taxon>
        <taxon>Myxococcota</taxon>
        <taxon>Myxococcia</taxon>
        <taxon>Myxococcales</taxon>
        <taxon>Cystobacterineae</taxon>
        <taxon>Anaeromyxobacteraceae</taxon>
        <taxon>Anaeromyxobacter</taxon>
    </lineage>
</organism>
<reference key="1">
    <citation type="submission" date="2006-01" db="EMBL/GenBank/DDBJ databases">
        <title>Complete sequence of Anaeromyxobacter dehalogenans 2CP-C.</title>
        <authorList>
            <person name="Copeland A."/>
            <person name="Lucas S."/>
            <person name="Lapidus A."/>
            <person name="Barry K."/>
            <person name="Detter J.C."/>
            <person name="Glavina T."/>
            <person name="Hammon N."/>
            <person name="Israni S."/>
            <person name="Pitluck S."/>
            <person name="Brettin T."/>
            <person name="Bruce D."/>
            <person name="Han C."/>
            <person name="Tapia R."/>
            <person name="Gilna P."/>
            <person name="Kiss H."/>
            <person name="Schmutz J."/>
            <person name="Larimer F."/>
            <person name="Land M."/>
            <person name="Kyrpides N."/>
            <person name="Anderson I."/>
            <person name="Sanford R.A."/>
            <person name="Ritalahti K.M."/>
            <person name="Thomas H.S."/>
            <person name="Kirby J.R."/>
            <person name="Zhulin I.B."/>
            <person name="Loeffler F.E."/>
            <person name="Richardson P."/>
        </authorList>
    </citation>
    <scope>NUCLEOTIDE SEQUENCE [LARGE SCALE GENOMIC DNA]</scope>
    <source>
        <strain>2CP-C</strain>
    </source>
</reference>
<proteinExistence type="inferred from homology"/>
<gene>
    <name evidence="1" type="primary">secD</name>
    <name type="ordered locus">Adeh_2540</name>
</gene>
<accession>Q2IKX9</accession>
<feature type="chain" id="PRO_0000412673" description="Protein translocase subunit SecD">
    <location>
        <begin position="1"/>
        <end position="613"/>
    </location>
</feature>
<feature type="transmembrane region" description="Helical" evidence="1">
    <location>
        <begin position="10"/>
        <end position="30"/>
    </location>
</feature>
<feature type="transmembrane region" description="Helical" evidence="1">
    <location>
        <begin position="452"/>
        <end position="472"/>
    </location>
</feature>
<feature type="transmembrane region" description="Helical" evidence="1">
    <location>
        <begin position="477"/>
        <end position="497"/>
    </location>
</feature>
<feature type="transmembrane region" description="Helical" evidence="1">
    <location>
        <begin position="503"/>
        <end position="523"/>
    </location>
</feature>
<feature type="transmembrane region" description="Helical" evidence="1">
    <location>
        <begin position="548"/>
        <end position="568"/>
    </location>
</feature>
<feature type="transmembrane region" description="Helical" evidence="1">
    <location>
        <begin position="576"/>
        <end position="596"/>
    </location>
</feature>
<name>SECD_ANADE</name>
<evidence type="ECO:0000255" key="1">
    <source>
        <dbReference type="HAMAP-Rule" id="MF_01463"/>
    </source>
</evidence>
<protein>
    <recommendedName>
        <fullName evidence="1">Protein translocase subunit SecD</fullName>
    </recommendedName>
</protein>
<comment type="function">
    <text evidence="1">Part of the Sec protein translocase complex. Interacts with the SecYEG preprotein conducting channel. SecDF uses the proton motive force (PMF) to complete protein translocation after the ATP-dependent function of SecA.</text>
</comment>
<comment type="subunit">
    <text evidence="1">Forms a complex with SecF. Part of the essential Sec protein translocation apparatus which comprises SecA, SecYEG and auxiliary proteins SecDF-YajC and YidC.</text>
</comment>
<comment type="subcellular location">
    <subcellularLocation>
        <location evidence="1">Cell inner membrane</location>
        <topology evidence="1">Multi-pass membrane protein</topology>
    </subcellularLocation>
</comment>
<comment type="similarity">
    <text evidence="1">Belongs to the SecD/SecF family. SecD subfamily.</text>
</comment>
<sequence length="613" mass="66580">MERSWYWRVALVVAVAILSIYQLVPSWFYFKLPPDQRNTEAYDTSVPGWAPDAKHHLNLGLDLQGGILLSMGVDVDRAVKTKVARRADEIGEFLKGKNVAFTGTKVVGGGAQVEVSAANPGEVKDAVLGSTGYSEEMYSPGGAPDGAVRFAFKDSVLRDFREKAVKQAEKVIRNRVDKWGVTEPDIKTKANNQIQVQLPGFKDPEKAKELLGRTAQLEFKIADDENPVLDQVRTQLPQCQGDRQGLSLPLPESGCWTVEPVELPSGGSRAATMVAANTRTELEKVITEKLNPLLDPQKNVVGIGEGQVGQGPIKTTYYRTYLLRAKTELTGDYIADAAVAIDQSDTLQRGRPVVSFKMSPEGARLMDKLTSENMRRRMATVLDDKVETAPYIQGRISSNGQITLGSGRNQQDMFDEANGIALVLKAGALPAPVTITEERTVGATLGPELVRKGTLAALVGLALVVVFMVVYYRGTGLVADVALALNGLLVLAVMSMIGTTLTLPGIAGFVLTLGMAVDANVLINERIREEMRAGRNVRQSVQLGYDRVFWTIVDSHVTTLVAGVVLFQYGSGPIRGFAVTLIIGLVASMFTSIVVTRVIMEYFTRHDTARLSV</sequence>